<protein>
    <recommendedName>
        <fullName evidence="1">3-phosphoshikimate 1-carboxyvinyltransferase</fullName>
        <ecNumber evidence="1">2.5.1.19</ecNumber>
    </recommendedName>
    <alternativeName>
        <fullName evidence="1">5-enolpyruvylshikimate-3-phosphate synthase</fullName>
        <shortName evidence="1">EPSP synthase</shortName>
        <shortName evidence="1">EPSPS</shortName>
    </alternativeName>
</protein>
<comment type="function">
    <text evidence="1">Catalyzes the transfer of the enolpyruvyl moiety of phosphoenolpyruvate (PEP) to the 5-hydroxyl of shikimate-3-phosphate (S3P) to produce enolpyruvyl shikimate-3-phosphate and inorganic phosphate.</text>
</comment>
<comment type="catalytic activity">
    <reaction evidence="1">
        <text>3-phosphoshikimate + phosphoenolpyruvate = 5-O-(1-carboxyvinyl)-3-phosphoshikimate + phosphate</text>
        <dbReference type="Rhea" id="RHEA:21256"/>
        <dbReference type="ChEBI" id="CHEBI:43474"/>
        <dbReference type="ChEBI" id="CHEBI:57701"/>
        <dbReference type="ChEBI" id="CHEBI:58702"/>
        <dbReference type="ChEBI" id="CHEBI:145989"/>
        <dbReference type="EC" id="2.5.1.19"/>
    </reaction>
    <physiologicalReaction direction="left-to-right" evidence="1">
        <dbReference type="Rhea" id="RHEA:21257"/>
    </physiologicalReaction>
</comment>
<comment type="pathway">
    <text evidence="1">Metabolic intermediate biosynthesis; chorismate biosynthesis.</text>
</comment>
<comment type="subunit">
    <text evidence="1">Monomer.</text>
</comment>
<comment type="subcellular location">
    <subcellularLocation>
        <location evidence="1">Cytoplasm</location>
    </subcellularLocation>
</comment>
<comment type="similarity">
    <text evidence="1">Belongs to the EPSP synthase family.</text>
</comment>
<name>AROA_THEKO</name>
<keyword id="KW-0028">Amino-acid biosynthesis</keyword>
<keyword id="KW-0057">Aromatic amino acid biosynthesis</keyword>
<keyword id="KW-0963">Cytoplasm</keyword>
<keyword id="KW-1185">Reference proteome</keyword>
<keyword id="KW-0808">Transferase</keyword>
<proteinExistence type="inferred from homology"/>
<feature type="chain" id="PRO_0000088336" description="3-phosphoshikimate 1-carboxyvinyltransferase">
    <location>
        <begin position="1"/>
        <end position="399"/>
    </location>
</feature>
<feature type="active site" description="Proton acceptor" evidence="1">
    <location>
        <position position="288"/>
    </location>
</feature>
<feature type="binding site" evidence="1">
    <location>
        <position position="19"/>
    </location>
    <ligand>
        <name>3-phosphoshikimate</name>
        <dbReference type="ChEBI" id="CHEBI:145989"/>
    </ligand>
</feature>
<feature type="binding site" evidence="1">
    <location>
        <position position="19"/>
    </location>
    <ligand>
        <name>phosphoenolpyruvate</name>
        <dbReference type="ChEBI" id="CHEBI:58702"/>
    </ligand>
</feature>
<feature type="binding site" evidence="1">
    <location>
        <position position="20"/>
    </location>
    <ligand>
        <name>3-phosphoshikimate</name>
        <dbReference type="ChEBI" id="CHEBI:145989"/>
    </ligand>
</feature>
<feature type="binding site" evidence="1">
    <location>
        <position position="24"/>
    </location>
    <ligand>
        <name>3-phosphoshikimate</name>
        <dbReference type="ChEBI" id="CHEBI:145989"/>
    </ligand>
</feature>
<feature type="binding site" evidence="1">
    <location>
        <position position="83"/>
    </location>
    <ligand>
        <name>phosphoenolpyruvate</name>
        <dbReference type="ChEBI" id="CHEBI:58702"/>
    </ligand>
</feature>
<feature type="binding site" evidence="1">
    <location>
        <position position="111"/>
    </location>
    <ligand>
        <name>phosphoenolpyruvate</name>
        <dbReference type="ChEBI" id="CHEBI:58702"/>
    </ligand>
</feature>
<feature type="binding site" evidence="1">
    <location>
        <position position="152"/>
    </location>
    <ligand>
        <name>3-phosphoshikimate</name>
        <dbReference type="ChEBI" id="CHEBI:145989"/>
    </ligand>
</feature>
<feature type="binding site" evidence="1">
    <location>
        <position position="153"/>
    </location>
    <ligand>
        <name>3-phosphoshikimate</name>
        <dbReference type="ChEBI" id="CHEBI:145989"/>
    </ligand>
</feature>
<feature type="binding site" evidence="1">
    <location>
        <position position="154"/>
    </location>
    <ligand>
        <name>3-phosphoshikimate</name>
        <dbReference type="ChEBI" id="CHEBI:145989"/>
    </ligand>
</feature>
<feature type="binding site" evidence="1">
    <location>
        <position position="154"/>
    </location>
    <ligand>
        <name>phosphoenolpyruvate</name>
        <dbReference type="ChEBI" id="CHEBI:58702"/>
    </ligand>
</feature>
<feature type="binding site" evidence="1">
    <location>
        <position position="288"/>
    </location>
    <ligand>
        <name>3-phosphoshikimate</name>
        <dbReference type="ChEBI" id="CHEBI:145989"/>
    </ligand>
</feature>
<feature type="binding site" evidence="1">
    <location>
        <position position="310"/>
    </location>
    <ligand>
        <name>3-phosphoshikimate</name>
        <dbReference type="ChEBI" id="CHEBI:145989"/>
    </ligand>
</feature>
<feature type="binding site" evidence="1">
    <location>
        <position position="314"/>
    </location>
    <ligand>
        <name>3-phosphoshikimate</name>
        <dbReference type="ChEBI" id="CHEBI:145989"/>
    </ligand>
</feature>
<feature type="binding site" evidence="1">
    <location>
        <position position="318"/>
    </location>
    <ligand>
        <name>phosphoenolpyruvate</name>
        <dbReference type="ChEBI" id="CHEBI:58702"/>
    </ligand>
</feature>
<feature type="binding site" evidence="1">
    <location>
        <position position="359"/>
    </location>
    <ligand>
        <name>phosphoenolpyruvate</name>
        <dbReference type="ChEBI" id="CHEBI:58702"/>
    </ligand>
</feature>
<feature type="binding site" evidence="1">
    <location>
        <position position="385"/>
    </location>
    <ligand>
        <name>phosphoenolpyruvate</name>
        <dbReference type="ChEBI" id="CHEBI:58702"/>
    </ligand>
</feature>
<dbReference type="EC" id="2.5.1.19" evidence="1"/>
<dbReference type="EMBL" id="AP006878">
    <property type="protein sequence ID" value="BAD84452.1"/>
    <property type="molecule type" value="Genomic_DNA"/>
</dbReference>
<dbReference type="RefSeq" id="WP_011249218.1">
    <property type="nucleotide sequence ID" value="NC_006624.1"/>
</dbReference>
<dbReference type="SMR" id="Q5JFT3"/>
<dbReference type="FunCoup" id="Q5JFT3">
    <property type="interactions" value="114"/>
</dbReference>
<dbReference type="STRING" id="69014.TK0263"/>
<dbReference type="EnsemblBacteria" id="BAD84452">
    <property type="protein sequence ID" value="BAD84452"/>
    <property type="gene ID" value="TK0263"/>
</dbReference>
<dbReference type="GeneID" id="78446766"/>
<dbReference type="KEGG" id="tko:TK0263"/>
<dbReference type="PATRIC" id="fig|69014.16.peg.262"/>
<dbReference type="eggNOG" id="arCOG04134">
    <property type="taxonomic scope" value="Archaea"/>
</dbReference>
<dbReference type="HOGENOM" id="CLU_024321_0_0_2"/>
<dbReference type="InParanoid" id="Q5JFT3"/>
<dbReference type="OrthoDB" id="43788at2157"/>
<dbReference type="PhylomeDB" id="Q5JFT3"/>
<dbReference type="UniPathway" id="UPA00053"/>
<dbReference type="Proteomes" id="UP000000536">
    <property type="component" value="Chromosome"/>
</dbReference>
<dbReference type="GO" id="GO:0005737">
    <property type="term" value="C:cytoplasm"/>
    <property type="evidence" value="ECO:0007669"/>
    <property type="project" value="UniProtKB-SubCell"/>
</dbReference>
<dbReference type="GO" id="GO:0003866">
    <property type="term" value="F:3-phosphoshikimate 1-carboxyvinyltransferase activity"/>
    <property type="evidence" value="ECO:0000318"/>
    <property type="project" value="GO_Central"/>
</dbReference>
<dbReference type="GO" id="GO:0008652">
    <property type="term" value="P:amino acid biosynthetic process"/>
    <property type="evidence" value="ECO:0007669"/>
    <property type="project" value="UniProtKB-KW"/>
</dbReference>
<dbReference type="GO" id="GO:0009073">
    <property type="term" value="P:aromatic amino acid family biosynthetic process"/>
    <property type="evidence" value="ECO:0007669"/>
    <property type="project" value="UniProtKB-KW"/>
</dbReference>
<dbReference type="GO" id="GO:0009423">
    <property type="term" value="P:chorismate biosynthetic process"/>
    <property type="evidence" value="ECO:0000318"/>
    <property type="project" value="GO_Central"/>
</dbReference>
<dbReference type="CDD" id="cd01556">
    <property type="entry name" value="EPSP_synthase"/>
    <property type="match status" value="1"/>
</dbReference>
<dbReference type="Gene3D" id="3.65.10.10">
    <property type="entry name" value="Enolpyruvate transferase domain"/>
    <property type="match status" value="2"/>
</dbReference>
<dbReference type="HAMAP" id="MF_00210">
    <property type="entry name" value="EPSP_synth"/>
    <property type="match status" value="1"/>
</dbReference>
<dbReference type="InterPro" id="IPR001986">
    <property type="entry name" value="Enolpyruvate_Tfrase_dom"/>
</dbReference>
<dbReference type="InterPro" id="IPR036968">
    <property type="entry name" value="Enolpyruvate_Tfrase_sf"/>
</dbReference>
<dbReference type="InterPro" id="IPR006264">
    <property type="entry name" value="EPSP_synthase"/>
</dbReference>
<dbReference type="InterPro" id="IPR023193">
    <property type="entry name" value="EPSP_synthase_CS"/>
</dbReference>
<dbReference type="InterPro" id="IPR013792">
    <property type="entry name" value="RNA3'P_cycl/enolpyr_Trfase_a/b"/>
</dbReference>
<dbReference type="NCBIfam" id="TIGR01356">
    <property type="entry name" value="aroA"/>
    <property type="match status" value="1"/>
</dbReference>
<dbReference type="PANTHER" id="PTHR21090">
    <property type="entry name" value="AROM/DEHYDROQUINATE SYNTHASE"/>
    <property type="match status" value="1"/>
</dbReference>
<dbReference type="PANTHER" id="PTHR21090:SF5">
    <property type="entry name" value="PENTAFUNCTIONAL AROM POLYPEPTIDE"/>
    <property type="match status" value="1"/>
</dbReference>
<dbReference type="Pfam" id="PF00275">
    <property type="entry name" value="EPSP_synthase"/>
    <property type="match status" value="1"/>
</dbReference>
<dbReference type="PIRSF" id="PIRSF000505">
    <property type="entry name" value="EPSPS"/>
    <property type="match status" value="1"/>
</dbReference>
<dbReference type="SUPFAM" id="SSF55205">
    <property type="entry name" value="EPT/RTPC-like"/>
    <property type="match status" value="1"/>
</dbReference>
<dbReference type="PROSITE" id="PS00885">
    <property type="entry name" value="EPSP_SYNTHASE_2"/>
    <property type="match status" value="1"/>
</dbReference>
<evidence type="ECO:0000255" key="1">
    <source>
        <dbReference type="HAMAP-Rule" id="MF_00210"/>
    </source>
</evidence>
<reference key="1">
    <citation type="journal article" date="2005" name="Genome Res.">
        <title>Complete genome sequence of the hyperthermophilic archaeon Thermococcus kodakaraensis KOD1 and comparison with Pyrococcus genomes.</title>
        <authorList>
            <person name="Fukui T."/>
            <person name="Atomi H."/>
            <person name="Kanai T."/>
            <person name="Matsumi R."/>
            <person name="Fujiwara S."/>
            <person name="Imanaka T."/>
        </authorList>
    </citation>
    <scope>NUCLEOTIDE SEQUENCE [LARGE SCALE GENOMIC DNA]</scope>
    <source>
        <strain>ATCC BAA-918 / JCM 12380 / KOD1</strain>
    </source>
</reference>
<sequence>MIIRPVDEVRGELNAPPSKSYTHRAYFLALLAEGESTIENPLVCDDTLATIEAIRSFGAGVDGKTVVPPEEPSPGFVYARESGTTARFSTALAGGIGGKTLIDGARRLRERPMDGLVKALKGLGAEVDGFSLPLTVKGPVKSGRVSVDASKSSQFVSGLLLLGAEVGLKVEARNPVSKPYIEMTLRTMEAFGVEFEREGFSFEVYPGVKGTRYKVPGDYSTASFFLAAGALYGKVRVNNLLREDVQADMAFLDALEEFGARVKRGRDYVKVEGGELKAVALDCSDFPDSFPILAVVAAYAEGRSVIRARQLRFKESDRVRAMAVNLSRMGVKVRELEDGLEIEGGRPRGAKVETFNDHRIAMAMSIAALGATGPSIIEDTESVSKSHPGFFDDLRRLLE</sequence>
<accession>Q5JFT3</accession>
<gene>
    <name evidence="1" type="primary">aroA</name>
    <name type="ordered locus">TK0263</name>
</gene>
<organism>
    <name type="scientific">Thermococcus kodakarensis (strain ATCC BAA-918 / JCM 12380 / KOD1)</name>
    <name type="common">Pyrococcus kodakaraensis (strain KOD1)</name>
    <dbReference type="NCBI Taxonomy" id="69014"/>
    <lineage>
        <taxon>Archaea</taxon>
        <taxon>Methanobacteriati</taxon>
        <taxon>Methanobacteriota</taxon>
        <taxon>Thermococci</taxon>
        <taxon>Thermococcales</taxon>
        <taxon>Thermococcaceae</taxon>
        <taxon>Thermococcus</taxon>
    </lineage>
</organism>